<protein>
    <recommendedName>
        <fullName evidence="1">Formate--tetrahydrofolate ligase</fullName>
        <ecNumber evidence="1">6.3.4.3</ecNumber>
    </recommendedName>
    <alternativeName>
        <fullName evidence="1">Formyltetrahydrofolate synthetase</fullName>
        <shortName evidence="1">FHS</shortName>
        <shortName evidence="1">FTHFS</shortName>
    </alternativeName>
</protein>
<proteinExistence type="inferred from homology"/>
<evidence type="ECO:0000255" key="1">
    <source>
        <dbReference type="HAMAP-Rule" id="MF_01543"/>
    </source>
</evidence>
<dbReference type="EC" id="6.3.4.3" evidence="1"/>
<dbReference type="EMBL" id="AP008971">
    <property type="protein sequence ID" value="BAG07879.1"/>
    <property type="molecule type" value="Genomic_DNA"/>
</dbReference>
<dbReference type="SMR" id="B0S0G1"/>
<dbReference type="STRING" id="334413.FMG_0461"/>
<dbReference type="KEGG" id="fma:FMG_0461"/>
<dbReference type="eggNOG" id="COG2759">
    <property type="taxonomic scope" value="Bacteria"/>
</dbReference>
<dbReference type="HOGENOM" id="CLU_003601_3_3_9"/>
<dbReference type="UniPathway" id="UPA00193"/>
<dbReference type="Proteomes" id="UP000001319">
    <property type="component" value="Chromosome"/>
</dbReference>
<dbReference type="GO" id="GO:0005524">
    <property type="term" value="F:ATP binding"/>
    <property type="evidence" value="ECO:0007669"/>
    <property type="project" value="UniProtKB-UniRule"/>
</dbReference>
<dbReference type="GO" id="GO:0004329">
    <property type="term" value="F:formate-tetrahydrofolate ligase activity"/>
    <property type="evidence" value="ECO:0007669"/>
    <property type="project" value="UniProtKB-UniRule"/>
</dbReference>
<dbReference type="GO" id="GO:0035999">
    <property type="term" value="P:tetrahydrofolate interconversion"/>
    <property type="evidence" value="ECO:0007669"/>
    <property type="project" value="UniProtKB-UniRule"/>
</dbReference>
<dbReference type="CDD" id="cd00477">
    <property type="entry name" value="FTHFS"/>
    <property type="match status" value="1"/>
</dbReference>
<dbReference type="FunFam" id="3.30.1510.10:FF:000001">
    <property type="entry name" value="Formate--tetrahydrofolate ligase"/>
    <property type="match status" value="1"/>
</dbReference>
<dbReference type="FunFam" id="3.10.410.10:FF:000001">
    <property type="entry name" value="Putative formate--tetrahydrofolate ligase"/>
    <property type="match status" value="1"/>
</dbReference>
<dbReference type="Gene3D" id="3.30.1510.10">
    <property type="entry name" value="Domain 2, N(10)-formyltetrahydrofolate synthetase"/>
    <property type="match status" value="1"/>
</dbReference>
<dbReference type="Gene3D" id="3.10.410.10">
    <property type="entry name" value="Formyltetrahydrofolate synthetase, domain 3"/>
    <property type="match status" value="1"/>
</dbReference>
<dbReference type="Gene3D" id="3.40.50.300">
    <property type="entry name" value="P-loop containing nucleotide triphosphate hydrolases"/>
    <property type="match status" value="1"/>
</dbReference>
<dbReference type="HAMAP" id="MF_01543">
    <property type="entry name" value="FTHFS"/>
    <property type="match status" value="1"/>
</dbReference>
<dbReference type="InterPro" id="IPR000559">
    <property type="entry name" value="Formate_THF_ligase"/>
</dbReference>
<dbReference type="InterPro" id="IPR020628">
    <property type="entry name" value="Formate_THF_ligase_CS"/>
</dbReference>
<dbReference type="InterPro" id="IPR027417">
    <property type="entry name" value="P-loop_NTPase"/>
</dbReference>
<dbReference type="NCBIfam" id="NF010030">
    <property type="entry name" value="PRK13505.1"/>
    <property type="match status" value="1"/>
</dbReference>
<dbReference type="Pfam" id="PF01268">
    <property type="entry name" value="FTHFS"/>
    <property type="match status" value="1"/>
</dbReference>
<dbReference type="SUPFAM" id="SSF52540">
    <property type="entry name" value="P-loop containing nucleoside triphosphate hydrolases"/>
    <property type="match status" value="1"/>
</dbReference>
<dbReference type="PROSITE" id="PS00721">
    <property type="entry name" value="FTHFS_1"/>
    <property type="match status" value="1"/>
</dbReference>
<keyword id="KW-0067">ATP-binding</keyword>
<keyword id="KW-0436">Ligase</keyword>
<keyword id="KW-0547">Nucleotide-binding</keyword>
<keyword id="KW-0554">One-carbon metabolism</keyword>
<keyword id="KW-1185">Reference proteome</keyword>
<sequence>MFMATDVEIAQKAKLEKISVIAEKMGLTEEDYEQYGRYKAKLDLNLFEKNKDKKDGKLILMTSINPTPTGEGKTTMNVGLAMGLNKIGKNAISVLREPSLGPNFGMKGGAAGGGYAQVVPMDEINMHFTGDFHAITTANNLICAMMDNHIHQGNALNIDPKQILIKRCMDMNERELRDIIIGVGAKGNGVMRQDGFEITVASEIMAILCLAKDLKDLKERVGNILIAFDKEGKPVYARDVKADGAVALVMKEAIKPNLVQTLEHTPAIIHGGPFANIAHGCNSLIATKLGLKLGDYVVTEAGFGADLGAEKFFDIKCRNDLHPNMVCIVATIKALKHHGEAEDFKVENVEALEKGYANLKRHIENMKKYKVPVVVAINRFATDTDAEIKKLTELVEADGTRAIFCDVWAKGGEGAKELAEYVVENTKEENDFEFLYDLELPIKEKIEKIAKEIYRADGVEFSAKAKKKLKQIKELGLDNYPVCMAKTQYSFSDNKKLIGAPTGFTITVSDFKISRGAGFVVALLGSVMTMPGLPKVPSAENCDVLDDGTVVGLF</sequence>
<accession>B0S0G1</accession>
<organism>
    <name type="scientific">Finegoldia magna (strain ATCC 29328 / DSM 20472 / WAL 2508)</name>
    <name type="common">Peptostreptococcus magnus</name>
    <dbReference type="NCBI Taxonomy" id="334413"/>
    <lineage>
        <taxon>Bacteria</taxon>
        <taxon>Bacillati</taxon>
        <taxon>Bacillota</taxon>
        <taxon>Tissierellia</taxon>
        <taxon>Tissierellales</taxon>
        <taxon>Peptoniphilaceae</taxon>
        <taxon>Finegoldia</taxon>
    </lineage>
</organism>
<comment type="catalytic activity">
    <reaction evidence="1">
        <text>(6S)-5,6,7,8-tetrahydrofolate + formate + ATP = (6R)-10-formyltetrahydrofolate + ADP + phosphate</text>
        <dbReference type="Rhea" id="RHEA:20221"/>
        <dbReference type="ChEBI" id="CHEBI:15740"/>
        <dbReference type="ChEBI" id="CHEBI:30616"/>
        <dbReference type="ChEBI" id="CHEBI:43474"/>
        <dbReference type="ChEBI" id="CHEBI:57453"/>
        <dbReference type="ChEBI" id="CHEBI:195366"/>
        <dbReference type="ChEBI" id="CHEBI:456216"/>
        <dbReference type="EC" id="6.3.4.3"/>
    </reaction>
</comment>
<comment type="pathway">
    <text evidence="1">One-carbon metabolism; tetrahydrofolate interconversion.</text>
</comment>
<comment type="similarity">
    <text evidence="1">Belongs to the formate--tetrahydrofolate ligase family.</text>
</comment>
<feature type="chain" id="PRO_1000146683" description="Formate--tetrahydrofolate ligase">
    <location>
        <begin position="1"/>
        <end position="554"/>
    </location>
</feature>
<feature type="binding site" evidence="1">
    <location>
        <begin position="67"/>
        <end position="74"/>
    </location>
    <ligand>
        <name>ATP</name>
        <dbReference type="ChEBI" id="CHEBI:30616"/>
    </ligand>
</feature>
<reference key="1">
    <citation type="journal article" date="2008" name="DNA Res.">
        <title>Complete genome sequence of Finegoldia magna, an anaerobic opportunistic pathogen.</title>
        <authorList>
            <person name="Goto T."/>
            <person name="Yamashita A."/>
            <person name="Hirakawa H."/>
            <person name="Matsutani M."/>
            <person name="Todo K."/>
            <person name="Ohshima K."/>
            <person name="Toh H."/>
            <person name="Miyamoto K."/>
            <person name="Kuhara S."/>
            <person name="Hattori M."/>
            <person name="Shimizu T."/>
            <person name="Akimoto S."/>
        </authorList>
    </citation>
    <scope>NUCLEOTIDE SEQUENCE [LARGE SCALE GENOMIC DNA]</scope>
    <source>
        <strain>ATCC 29328 / DSM 20472 / WAL 2508</strain>
    </source>
</reference>
<name>FTHS_FINM2</name>
<gene>
    <name evidence="1" type="primary">fhs</name>
    <name type="ordered locus">FMG_0461</name>
</gene>